<name>CTL5A_DANRE</name>
<keyword id="KW-0050">Antiport</keyword>
<keyword id="KW-1003">Cell membrane</keyword>
<keyword id="KW-0325">Glycoprotein</keyword>
<keyword id="KW-0472">Membrane</keyword>
<keyword id="KW-1185">Reference proteome</keyword>
<keyword id="KW-0812">Transmembrane</keyword>
<keyword id="KW-1133">Transmembrane helix</keyword>
<keyword id="KW-0813">Transport</keyword>
<feature type="chain" id="PRO_0000359724" description="Choline transporter-like protein 5-A">
    <location>
        <begin position="1" status="less than"/>
        <end position="702"/>
    </location>
</feature>
<feature type="transmembrane region" description="Helical" evidence="2">
    <location>
        <begin position="21"/>
        <end position="41"/>
    </location>
</feature>
<feature type="topological domain" description="Extracellular" evidence="2">
    <location>
        <begin position="42"/>
        <end position="225"/>
    </location>
</feature>
<feature type="transmembrane region" description="Helical" evidence="2">
    <location>
        <begin position="226"/>
        <end position="246"/>
    </location>
</feature>
<feature type="topological domain" description="Cytoplasmic" evidence="2">
    <location>
        <begin position="247"/>
        <end position="249"/>
    </location>
</feature>
<feature type="transmembrane region" description="Helical" evidence="2">
    <location>
        <begin position="250"/>
        <end position="270"/>
    </location>
</feature>
<feature type="topological domain" description="Extracellular" evidence="2">
    <location>
        <begin position="271"/>
        <end position="308"/>
    </location>
</feature>
<feature type="transmembrane region" description="Helical" evidence="2">
    <location>
        <begin position="309"/>
        <end position="329"/>
    </location>
</feature>
<feature type="topological domain" description="Cytoplasmic" evidence="2">
    <location>
        <begin position="330"/>
        <end position="334"/>
    </location>
</feature>
<feature type="transmembrane region" description="Helical" evidence="2">
    <location>
        <begin position="335"/>
        <end position="355"/>
    </location>
</feature>
<feature type="topological domain" description="Extracellular" evidence="2">
    <location>
        <begin position="356"/>
        <end position="357"/>
    </location>
</feature>
<feature type="transmembrane region" description="Helical" evidence="2">
    <location>
        <begin position="358"/>
        <end position="378"/>
    </location>
</feature>
<feature type="topological domain" description="Cytoplasmic" evidence="2">
    <location>
        <begin position="379"/>
        <end position="443"/>
    </location>
</feature>
<feature type="transmembrane region" description="Helical" evidence="2">
    <location>
        <begin position="444"/>
        <end position="464"/>
    </location>
</feature>
<feature type="topological domain" description="Extracellular" evidence="2">
    <location>
        <begin position="465"/>
        <end position="498"/>
    </location>
</feature>
<feature type="transmembrane region" description="Helical" evidence="2">
    <location>
        <begin position="499"/>
        <end position="519"/>
    </location>
</feature>
<feature type="topological domain" description="Cytoplasmic" evidence="2">
    <location>
        <begin position="520"/>
        <end position="593"/>
    </location>
</feature>
<feature type="transmembrane region" description="Helical" evidence="2">
    <location>
        <begin position="594"/>
        <end position="614"/>
    </location>
</feature>
<feature type="topological domain" description="Extracellular" evidence="2">
    <location>
        <begin position="615"/>
        <end position="632"/>
    </location>
</feature>
<feature type="transmembrane region" description="Helical" evidence="2">
    <location>
        <begin position="633"/>
        <end position="653"/>
    </location>
</feature>
<feature type="topological domain" description="Cytoplasmic" evidence="2">
    <location>
        <begin position="654"/>
        <end position="699"/>
    </location>
</feature>
<feature type="glycosylation site" description="N-linked (GlcNAc...) asparagine" evidence="2">
    <location>
        <position position="120"/>
    </location>
</feature>
<feature type="glycosylation site" description="N-linked (GlcNAc...) asparagine" evidence="2">
    <location>
        <position position="173"/>
    </location>
</feature>
<feature type="glycosylation site" description="N-linked (GlcNAc...) asparagine" evidence="2">
    <location>
        <position position="180"/>
    </location>
</feature>
<feature type="non-terminal residue">
    <location>
        <position position="1"/>
    </location>
</feature>
<evidence type="ECO:0000250" key="1">
    <source>
        <dbReference type="UniProtKB" id="Q8NCS7"/>
    </source>
</evidence>
<evidence type="ECO:0000255" key="2"/>
<evidence type="ECO:0000305" key="3"/>
<proteinExistence type="inferred from homology"/>
<gene>
    <name type="primary">slc44a5a</name>
    <name type="synonym">ctl5a</name>
    <name type="ORF">si:dkey-189n19.2</name>
</gene>
<organism>
    <name type="scientific">Danio rerio</name>
    <name type="common">Zebrafish</name>
    <name type="synonym">Brachydanio rerio</name>
    <dbReference type="NCBI Taxonomy" id="7955"/>
    <lineage>
        <taxon>Eukaryota</taxon>
        <taxon>Metazoa</taxon>
        <taxon>Chordata</taxon>
        <taxon>Craniata</taxon>
        <taxon>Vertebrata</taxon>
        <taxon>Euteleostomi</taxon>
        <taxon>Actinopterygii</taxon>
        <taxon>Neopterygii</taxon>
        <taxon>Teleostei</taxon>
        <taxon>Ostariophysi</taxon>
        <taxon>Cypriniformes</taxon>
        <taxon>Danionidae</taxon>
        <taxon>Danioninae</taxon>
        <taxon>Danio</taxon>
    </lineage>
</organism>
<comment type="function">
    <text evidence="1">Choline/H+ antiporter.</text>
</comment>
<comment type="catalytic activity">
    <reaction evidence="1">
        <text>choline(out) + n H(+)(in) = choline(in) + n H(+)(out)</text>
        <dbReference type="Rhea" id="RHEA:75463"/>
        <dbReference type="ChEBI" id="CHEBI:15354"/>
        <dbReference type="ChEBI" id="CHEBI:15378"/>
    </reaction>
</comment>
<comment type="subcellular location">
    <subcellularLocation>
        <location evidence="1">Cell membrane</location>
        <topology evidence="2">Multi-pass membrane protein</topology>
    </subcellularLocation>
</comment>
<comment type="similarity">
    <text evidence="3">Belongs to the CTL (choline transporter-like) family.</text>
</comment>
<protein>
    <recommendedName>
        <fullName>Choline transporter-like protein 5-A</fullName>
    </recommendedName>
    <alternativeName>
        <fullName>Solute carrier family 44 member 5-A</fullName>
    </alternativeName>
</protein>
<accession>A5PMW0</accession>
<reference key="1">
    <citation type="journal article" date="2013" name="Nature">
        <title>The zebrafish reference genome sequence and its relationship to the human genome.</title>
        <authorList>
            <person name="Howe K."/>
            <person name="Clark M.D."/>
            <person name="Torroja C.F."/>
            <person name="Torrance J."/>
            <person name="Berthelot C."/>
            <person name="Muffato M."/>
            <person name="Collins J.E."/>
            <person name="Humphray S."/>
            <person name="McLaren K."/>
            <person name="Matthews L."/>
            <person name="McLaren S."/>
            <person name="Sealy I."/>
            <person name="Caccamo M."/>
            <person name="Churcher C."/>
            <person name="Scott C."/>
            <person name="Barrett J.C."/>
            <person name="Koch R."/>
            <person name="Rauch G.J."/>
            <person name="White S."/>
            <person name="Chow W."/>
            <person name="Kilian B."/>
            <person name="Quintais L.T."/>
            <person name="Guerra-Assuncao J.A."/>
            <person name="Zhou Y."/>
            <person name="Gu Y."/>
            <person name="Yen J."/>
            <person name="Vogel J.H."/>
            <person name="Eyre T."/>
            <person name="Redmond S."/>
            <person name="Banerjee R."/>
            <person name="Chi J."/>
            <person name="Fu B."/>
            <person name="Langley E."/>
            <person name="Maguire S.F."/>
            <person name="Laird G.K."/>
            <person name="Lloyd D."/>
            <person name="Kenyon E."/>
            <person name="Donaldson S."/>
            <person name="Sehra H."/>
            <person name="Almeida-King J."/>
            <person name="Loveland J."/>
            <person name="Trevanion S."/>
            <person name="Jones M."/>
            <person name="Quail M."/>
            <person name="Willey D."/>
            <person name="Hunt A."/>
            <person name="Burton J."/>
            <person name="Sims S."/>
            <person name="McLay K."/>
            <person name="Plumb B."/>
            <person name="Davis J."/>
            <person name="Clee C."/>
            <person name="Oliver K."/>
            <person name="Clark R."/>
            <person name="Riddle C."/>
            <person name="Elliot D."/>
            <person name="Threadgold G."/>
            <person name="Harden G."/>
            <person name="Ware D."/>
            <person name="Begum S."/>
            <person name="Mortimore B."/>
            <person name="Kerry G."/>
            <person name="Heath P."/>
            <person name="Phillimore B."/>
            <person name="Tracey A."/>
            <person name="Corby N."/>
            <person name="Dunn M."/>
            <person name="Johnson C."/>
            <person name="Wood J."/>
            <person name="Clark S."/>
            <person name="Pelan S."/>
            <person name="Griffiths G."/>
            <person name="Smith M."/>
            <person name="Glithero R."/>
            <person name="Howden P."/>
            <person name="Barker N."/>
            <person name="Lloyd C."/>
            <person name="Stevens C."/>
            <person name="Harley J."/>
            <person name="Holt K."/>
            <person name="Panagiotidis G."/>
            <person name="Lovell J."/>
            <person name="Beasley H."/>
            <person name="Henderson C."/>
            <person name="Gordon D."/>
            <person name="Auger K."/>
            <person name="Wright D."/>
            <person name="Collins J."/>
            <person name="Raisen C."/>
            <person name="Dyer L."/>
            <person name="Leung K."/>
            <person name="Robertson L."/>
            <person name="Ambridge K."/>
            <person name="Leongamornlert D."/>
            <person name="McGuire S."/>
            <person name="Gilderthorp R."/>
            <person name="Griffiths C."/>
            <person name="Manthravadi D."/>
            <person name="Nichol S."/>
            <person name="Barker G."/>
            <person name="Whitehead S."/>
            <person name="Kay M."/>
            <person name="Brown J."/>
            <person name="Murnane C."/>
            <person name="Gray E."/>
            <person name="Humphries M."/>
            <person name="Sycamore N."/>
            <person name="Barker D."/>
            <person name="Saunders D."/>
            <person name="Wallis J."/>
            <person name="Babbage A."/>
            <person name="Hammond S."/>
            <person name="Mashreghi-Mohammadi M."/>
            <person name="Barr L."/>
            <person name="Martin S."/>
            <person name="Wray P."/>
            <person name="Ellington A."/>
            <person name="Matthews N."/>
            <person name="Ellwood M."/>
            <person name="Woodmansey R."/>
            <person name="Clark G."/>
            <person name="Cooper J."/>
            <person name="Tromans A."/>
            <person name="Grafham D."/>
            <person name="Skuce C."/>
            <person name="Pandian R."/>
            <person name="Andrews R."/>
            <person name="Harrison E."/>
            <person name="Kimberley A."/>
            <person name="Garnett J."/>
            <person name="Fosker N."/>
            <person name="Hall R."/>
            <person name="Garner P."/>
            <person name="Kelly D."/>
            <person name="Bird C."/>
            <person name="Palmer S."/>
            <person name="Gehring I."/>
            <person name="Berger A."/>
            <person name="Dooley C.M."/>
            <person name="Ersan-Urun Z."/>
            <person name="Eser C."/>
            <person name="Geiger H."/>
            <person name="Geisler M."/>
            <person name="Karotki L."/>
            <person name="Kirn A."/>
            <person name="Konantz J."/>
            <person name="Konantz M."/>
            <person name="Oberlander M."/>
            <person name="Rudolph-Geiger S."/>
            <person name="Teucke M."/>
            <person name="Lanz C."/>
            <person name="Raddatz G."/>
            <person name="Osoegawa K."/>
            <person name="Zhu B."/>
            <person name="Rapp A."/>
            <person name="Widaa S."/>
            <person name="Langford C."/>
            <person name="Yang F."/>
            <person name="Schuster S.C."/>
            <person name="Carter N.P."/>
            <person name="Harrow J."/>
            <person name="Ning Z."/>
            <person name="Herrero J."/>
            <person name="Searle S.M."/>
            <person name="Enright A."/>
            <person name="Geisler R."/>
            <person name="Plasterk R.H."/>
            <person name="Lee C."/>
            <person name="Westerfield M."/>
            <person name="de Jong P.J."/>
            <person name="Zon L.I."/>
            <person name="Postlethwait J.H."/>
            <person name="Nusslein-Volhard C."/>
            <person name="Hubbard T.J."/>
            <person name="Roest Crollius H."/>
            <person name="Rogers J."/>
            <person name="Stemple D.L."/>
        </authorList>
    </citation>
    <scope>NUCLEOTIDE SEQUENCE [LARGE SCALE GENOMIC DNA]</scope>
    <source>
        <strain>Tuebingen</strain>
    </source>
</reference>
<sequence>EPRKFDPTFRGPVYNRGCTDVLCCVLFVIVILGYIALGTVAWIHGDPRKVIYPTDSTGQFCGQKGTPNAKKAILFYFNILKCASPAVLINLQCPTTQMCVSKCPDRFATYTDMQLLYRFNKSHWDYYKQFCKPGFNNPQKSVAQVLRDEDCPSMIVPSRPFLQRCFPDFITRNGTLTVANKTAFKDALDTARSVTELRDAANGITSIHEAKEVGMKIVEDYASCWYWIVIGLFIALVISLIFILLLRFTAGFLLWFIIFAVILLVAYGIWHCYWEFAVLRETPGADVTISDIGFQTDLHVYLQLSQTWLVFMVTLGLTEASIVLMLIFLRKRVRIAIALLREGSRAISYIMSALFYPIITFVLLAICISYWAMTALFLASSGDAVYKVASGNPNCKYANQTCSPESFNRTNITKQCPGAQCLFAFYGGESLYHRYIFILQLCNLLVFLWLVNFTIALGQCTVAGAFASYYWARRKPADIPPCPVFSSFSRALRYHTGSLAFGSLILAVVQLIRVILEYLDHKLKGAHNAFARFLLCCLKCCFWCLERFIRFMNRNAYIMIAIYGKNFCTSAREAFYLLMRNVVRVAVLDKVTDFLLFLGKLLIAGSVGVIAFFLFTRKIPIIQEEVPVLNYYCVPLLTVILGSYLIAHSFFSVYAMCVDTLFLCFCEDLERNDGTTAKPFFMSPGLKRILGKAEQSPKKSRG</sequence>
<dbReference type="EMBL" id="BX901918">
    <property type="protein sequence ID" value="CAN88033.1"/>
    <property type="molecule type" value="Genomic_DNA"/>
</dbReference>
<dbReference type="SMR" id="A5PMW0"/>
<dbReference type="FunCoup" id="A5PMW0">
    <property type="interactions" value="1159"/>
</dbReference>
<dbReference type="STRING" id="7955.ENSDARP00000121140"/>
<dbReference type="GlyCosmos" id="A5PMW0">
    <property type="glycosylation" value="3 sites, No reported glycans"/>
</dbReference>
<dbReference type="PaxDb" id="7955-ENSDARP00000121140"/>
<dbReference type="eggNOG" id="KOG1362">
    <property type="taxonomic scope" value="Eukaryota"/>
</dbReference>
<dbReference type="InParanoid" id="A5PMW0"/>
<dbReference type="PhylomeDB" id="A5PMW0"/>
<dbReference type="Proteomes" id="UP000000437">
    <property type="component" value="Unplaced"/>
</dbReference>
<dbReference type="GO" id="GO:0016020">
    <property type="term" value="C:membrane"/>
    <property type="evidence" value="ECO:0000318"/>
    <property type="project" value="GO_Central"/>
</dbReference>
<dbReference type="GO" id="GO:0005886">
    <property type="term" value="C:plasma membrane"/>
    <property type="evidence" value="ECO:0000250"/>
    <property type="project" value="UniProtKB"/>
</dbReference>
<dbReference type="GO" id="GO:0015297">
    <property type="term" value="F:antiporter activity"/>
    <property type="evidence" value="ECO:0007669"/>
    <property type="project" value="UniProtKB-KW"/>
</dbReference>
<dbReference type="GO" id="GO:0015220">
    <property type="term" value="F:choline transmembrane transporter activity"/>
    <property type="evidence" value="ECO:0000250"/>
    <property type="project" value="UniProtKB"/>
</dbReference>
<dbReference type="GO" id="GO:0022857">
    <property type="term" value="F:transmembrane transporter activity"/>
    <property type="evidence" value="ECO:0000318"/>
    <property type="project" value="GO_Central"/>
</dbReference>
<dbReference type="GO" id="GO:0015871">
    <property type="term" value="P:choline transport"/>
    <property type="evidence" value="ECO:0000250"/>
    <property type="project" value="UniProtKB"/>
</dbReference>
<dbReference type="GO" id="GO:0055085">
    <property type="term" value="P:transmembrane transport"/>
    <property type="evidence" value="ECO:0000318"/>
    <property type="project" value="GO_Central"/>
</dbReference>
<dbReference type="InterPro" id="IPR007603">
    <property type="entry name" value="Choline_transptr-like"/>
</dbReference>
<dbReference type="PANTHER" id="PTHR12385">
    <property type="entry name" value="CHOLINE TRANSPORTER-LIKE (SLC FAMILY 44)"/>
    <property type="match status" value="1"/>
</dbReference>
<dbReference type="PANTHER" id="PTHR12385:SF42">
    <property type="entry name" value="CHOLINE TRANSPORTER-LIKE PROTEIN 5"/>
    <property type="match status" value="1"/>
</dbReference>
<dbReference type="Pfam" id="PF04515">
    <property type="entry name" value="Choline_transpo"/>
    <property type="match status" value="1"/>
</dbReference>